<keyword id="KW-0007">Acetylation</keyword>
<keyword id="KW-0021">Allosteric enzyme</keyword>
<keyword id="KW-0025">Alternative splicing</keyword>
<keyword id="KW-0067">ATP-binding</keyword>
<keyword id="KW-0963">Cytoplasm</keyword>
<keyword id="KW-0903">Direct protein sequencing</keyword>
<keyword id="KW-0324">Glycolysis</keyword>
<keyword id="KW-0379">Hydroxylation</keyword>
<keyword id="KW-1017">Isopeptide bond</keyword>
<keyword id="KW-0418">Kinase</keyword>
<keyword id="KW-0460">Magnesium</keyword>
<keyword id="KW-0479">Metal-binding</keyword>
<keyword id="KW-0488">Methylation</keyword>
<keyword id="KW-0547">Nucleotide-binding</keyword>
<keyword id="KW-0539">Nucleus</keyword>
<keyword id="KW-0597">Phosphoprotein</keyword>
<keyword id="KW-0630">Potassium</keyword>
<keyword id="KW-0670">Pyruvate</keyword>
<keyword id="KW-1185">Reference proteome</keyword>
<keyword id="KW-0702">S-nitrosylation</keyword>
<keyword id="KW-0808">Transferase</keyword>
<keyword id="KW-0810">Translation regulation</keyword>
<keyword id="KW-0832">Ubl conjugation</keyword>
<sequence length="531" mass="57818">MPKPDSEAGTAFIQTQQLHAAMADTFLEHMCRLDIDSAPITARNTGIICTIGPASRSVEMLKEMIKSGMNVARLNFSHGTHEYHAETIKNVRAATESFASDPILYRPVAVALDTKGPEIRTGLIKGSGTAEVELKKGATLKITLDNAYMEKCDENILWLDYKNICKVVEVGSKIYVDDGLISLQVKEKGADYLVTEVENGGSLGSKKGVNLPGAAVDLPAVSEKDIQDLKFGVEQDVDMVFASFIRKAADVHEVRKVLGEKGKNIKIISKIENHEGVRRFDEILEASDGIMVARGDLGIEIPAEKVFLAQKMMIGRCNRAGKPVICATQMLESMIKKPRPTRAEGSDVANAVLDGADCIMLSGETAKGDYPLEAVRMQHLIAREAEAAVFHRLLFEELARASSQSTDPLEAMAMGSVEASYKCLAAALIVLTESGRSAHQVARYRPRAPIIAVTRNPQTARQAHLYRGIFPVLCKDAVLDAWAEDVDLRVNLAMNVGKARGFFKKGDVVIVLTGWRPGSGFTNTMRVVPVP</sequence>
<proteinExistence type="evidence at protein level"/>
<name>KPYM_RAT</name>
<organism>
    <name type="scientific">Rattus norvegicus</name>
    <name type="common">Rat</name>
    <dbReference type="NCBI Taxonomy" id="10116"/>
    <lineage>
        <taxon>Eukaryota</taxon>
        <taxon>Metazoa</taxon>
        <taxon>Chordata</taxon>
        <taxon>Craniata</taxon>
        <taxon>Vertebrata</taxon>
        <taxon>Euteleostomi</taxon>
        <taxon>Mammalia</taxon>
        <taxon>Eutheria</taxon>
        <taxon>Euarchontoglires</taxon>
        <taxon>Glires</taxon>
        <taxon>Rodentia</taxon>
        <taxon>Myomorpha</taxon>
        <taxon>Muroidea</taxon>
        <taxon>Muridae</taxon>
        <taxon>Murinae</taxon>
        <taxon>Rattus</taxon>
    </lineage>
</organism>
<reference key="1">
    <citation type="journal article" date="1986" name="J. Biol. Chem.">
        <title>The M1- and M2-type isozymes of rat pyruvate kinase are produced from the same gene by alternative RNA splicing.</title>
        <authorList>
            <person name="Noguchi T."/>
            <person name="Inoue H."/>
            <person name="Tanaka T."/>
        </authorList>
    </citation>
    <scope>NUCLEOTIDE SEQUENCE [GENOMIC DNA] (ISOFORMS M1 AND M2)</scope>
</reference>
<reference key="2">
    <citation type="journal article" date="1989" name="J. Biol. Chem.">
        <title>Rat pyruvate kinase M gene: its complete structure and characterization of the 5'-flanking region.</title>
        <authorList>
            <person name="Takenaka M."/>
            <person name="Noguchi T."/>
            <person name="Inoue H."/>
            <person name="Yamada K."/>
            <person name="Matsuda T."/>
            <person name="Tanaka T."/>
        </authorList>
    </citation>
    <scope>NUCLEOTIDE SEQUENCE [GENOMIC DNA] (ISOFORMS M1 AND M2)</scope>
    <scope>SEQUENCE REVISION</scope>
</reference>
<reference key="3">
    <citation type="journal article" date="1989" name="Nucleic Acids Res.">
        <title>The nucleotide sequence of a full length cDNA encoding rat pituitary pyruvate kinase.</title>
        <authorList>
            <person name="Parkinson C."/>
            <person name="Kato H."/>
            <person name="Cheng S."/>
        </authorList>
    </citation>
    <scope>NUCLEOTIDE SEQUENCE [MRNA] (ISOFORM M1)</scope>
    <source>
        <tissue>Pituitary</tissue>
    </source>
</reference>
<reference key="4">
    <citation type="submission" date="2007-07" db="UniProtKB">
        <authorList>
            <person name="Lubec G."/>
            <person name="Afjehi-Sadat L."/>
            <person name="Chen W.-Q."/>
            <person name="Kang S.U."/>
        </authorList>
    </citation>
    <scope>PROTEIN SEQUENCE OF 33-56; 74-89; 93-115; 174-186; 208-246; 279-294; 343-376; 393-400; 423-436; 476-498 AND 505-526</scope>
    <scope>PROTEIN SEQUENCE OF 384-399 (ISOFORM M2)</scope>
    <scope>IDENTIFICATION BY MASS SPECTROMETRY</scope>
    <source>
        <strain>Sprague-Dawley</strain>
        <tissue>Brain</tissue>
        <tissue>Hippocampus</tissue>
        <tissue>Spinal cord</tissue>
    </source>
</reference>
<reference key="5">
    <citation type="journal article" date="2012" name="Nat. Commun.">
        <title>Quantitative maps of protein phosphorylation sites across 14 different rat organs and tissues.</title>
        <authorList>
            <person name="Lundby A."/>
            <person name="Secher A."/>
            <person name="Lage K."/>
            <person name="Nordsborg N.B."/>
            <person name="Dmytriyev A."/>
            <person name="Lundby C."/>
            <person name="Olsen J.V."/>
        </authorList>
    </citation>
    <scope>PHOSPHORYLATION [LARGE SCALE ANALYSIS] AT SER-97 AND SER-100</scope>
    <scope>IDENTIFICATION BY MASS SPECTROMETRY [LARGE SCALE ANALYSIS]</scope>
</reference>
<feature type="chain" id="PRO_0000112092" description="Pyruvate kinase PKM">
    <location>
        <begin position="1"/>
        <end position="531"/>
    </location>
</feature>
<feature type="region of interest" description="Interaction with POU5F1" evidence="2">
    <location>
        <begin position="307"/>
        <end position="531"/>
    </location>
</feature>
<feature type="region of interest" description="Intersubunit contact">
    <location>
        <begin position="389"/>
        <end position="433"/>
    </location>
</feature>
<feature type="binding site" evidence="2">
    <location>
        <position position="70"/>
    </location>
    <ligand>
        <name>L-serine</name>
        <dbReference type="ChEBI" id="CHEBI:33384"/>
    </ligand>
</feature>
<feature type="binding site" evidence="3">
    <location>
        <position position="73"/>
    </location>
    <ligand>
        <name>substrate</name>
    </ligand>
</feature>
<feature type="binding site" evidence="2">
    <location>
        <begin position="75"/>
        <end position="78"/>
    </location>
    <ligand>
        <name>ATP</name>
        <dbReference type="ChEBI" id="CHEBI:30616"/>
    </ligand>
</feature>
<feature type="binding site" evidence="2">
    <location>
        <position position="75"/>
    </location>
    <ligand>
        <name>K(+)</name>
        <dbReference type="ChEBI" id="CHEBI:29103"/>
    </ligand>
</feature>
<feature type="binding site" evidence="2">
    <location>
        <position position="77"/>
    </location>
    <ligand>
        <name>K(+)</name>
        <dbReference type="ChEBI" id="CHEBI:29103"/>
    </ligand>
</feature>
<feature type="binding site" evidence="2">
    <location>
        <position position="106"/>
    </location>
    <ligand>
        <name>L-serine</name>
        <dbReference type="ChEBI" id="CHEBI:33384"/>
    </ligand>
</feature>
<feature type="binding site" evidence="2">
    <location>
        <position position="113"/>
    </location>
    <ligand>
        <name>K(+)</name>
        <dbReference type="ChEBI" id="CHEBI:29103"/>
    </ligand>
</feature>
<feature type="binding site" evidence="2">
    <location>
        <position position="114"/>
    </location>
    <ligand>
        <name>K(+)</name>
        <dbReference type="ChEBI" id="CHEBI:29103"/>
    </ligand>
</feature>
<feature type="binding site" evidence="2">
    <location>
        <position position="120"/>
    </location>
    <ligand>
        <name>ATP</name>
        <dbReference type="ChEBI" id="CHEBI:30616"/>
    </ligand>
</feature>
<feature type="binding site" evidence="2">
    <location>
        <position position="207"/>
    </location>
    <ligand>
        <name>ATP</name>
        <dbReference type="ChEBI" id="CHEBI:30616"/>
    </ligand>
</feature>
<feature type="binding site" evidence="3">
    <location>
        <position position="270"/>
    </location>
    <ligand>
        <name>substrate</name>
    </ligand>
</feature>
<feature type="binding site" evidence="2">
    <location>
        <position position="272"/>
    </location>
    <ligand>
        <name>Mg(2+)</name>
        <dbReference type="ChEBI" id="CHEBI:18420"/>
    </ligand>
</feature>
<feature type="binding site" evidence="3">
    <location>
        <position position="295"/>
    </location>
    <ligand>
        <name>substrate</name>
    </ligand>
</feature>
<feature type="binding site" evidence="2">
    <location>
        <position position="296"/>
    </location>
    <ligand>
        <name>Mg(2+)</name>
        <dbReference type="ChEBI" id="CHEBI:18420"/>
    </ligand>
</feature>
<feature type="binding site" evidence="3">
    <location>
        <position position="296"/>
    </location>
    <ligand>
        <name>substrate</name>
    </ligand>
</feature>
<feature type="binding site" evidence="3">
    <location>
        <position position="328"/>
    </location>
    <ligand>
        <name>substrate</name>
    </ligand>
</feature>
<feature type="binding site" evidence="2">
    <location>
        <begin position="432"/>
        <end position="437"/>
    </location>
    <ligand>
        <name>beta-D-fructose 1,6-bisphosphate</name>
        <dbReference type="ChEBI" id="CHEBI:32966"/>
        <note>allosteric activator</note>
    </ligand>
</feature>
<feature type="binding site" evidence="2">
    <location>
        <position position="464"/>
    </location>
    <ligand>
        <name>L-serine</name>
        <dbReference type="ChEBI" id="CHEBI:33384"/>
    </ligand>
</feature>
<feature type="binding site" evidence="2">
    <location>
        <position position="482"/>
    </location>
    <ligand>
        <name>beta-D-fructose 1,6-bisphosphate</name>
        <dbReference type="ChEBI" id="CHEBI:32966"/>
        <note>allosteric activator</note>
    </ligand>
</feature>
<feature type="binding site" evidence="2">
    <location>
        <position position="489"/>
    </location>
    <ligand>
        <name>beta-D-fructose 1,6-bisphosphate</name>
        <dbReference type="ChEBI" id="CHEBI:32966"/>
        <note>allosteric activator</note>
    </ligand>
</feature>
<feature type="binding site" evidence="2">
    <location>
        <begin position="516"/>
        <end position="521"/>
    </location>
    <ligand>
        <name>beta-D-fructose 1,6-bisphosphate</name>
        <dbReference type="ChEBI" id="CHEBI:32966"/>
        <note>allosteric activator</note>
    </ligand>
</feature>
<feature type="site" description="Transition state stabilizer" evidence="1">
    <location>
        <position position="270"/>
    </location>
</feature>
<feature type="modified residue" description="N6,N6,N6-trimethyllysine" evidence="2">
    <location>
        <position position="3"/>
    </location>
</feature>
<feature type="modified residue" description="Phosphoserine" evidence="2">
    <location>
        <position position="37"/>
    </location>
</feature>
<feature type="modified residue" description="Phosphothreonine" evidence="2">
    <location>
        <position position="41"/>
    </location>
</feature>
<feature type="modified residue" description="N6-acetyllysine" evidence="2">
    <location>
        <position position="62"/>
    </location>
</feature>
<feature type="modified residue" description="N6-succinyllysine" evidence="4">
    <location>
        <position position="66"/>
    </location>
</feature>
<feature type="modified residue" description="N6-acetyllysine" evidence="2">
    <location>
        <position position="89"/>
    </location>
</feature>
<feature type="modified residue" description="Phosphoserine" evidence="7">
    <location>
        <position position="97"/>
    </location>
</feature>
<feature type="modified residue" description="Phosphoserine" evidence="7">
    <location>
        <position position="100"/>
    </location>
</feature>
<feature type="modified residue" description="Phosphotyrosine" evidence="2">
    <location>
        <position position="105"/>
    </location>
</feature>
<feature type="modified residue" description="Phosphoserine" evidence="2">
    <location>
        <position position="127"/>
    </location>
</feature>
<feature type="modified residue" description="Phosphotyrosine" evidence="4">
    <location>
        <position position="148"/>
    </location>
</feature>
<feature type="modified residue" description="N6-acetyllysine; alternate" evidence="2">
    <location>
        <position position="166"/>
    </location>
</feature>
<feature type="modified residue" description="N6-succinyllysine; alternate" evidence="4">
    <location>
        <position position="166"/>
    </location>
</feature>
<feature type="modified residue" description="Phosphotyrosine" evidence="2">
    <location>
        <position position="175"/>
    </location>
</feature>
<feature type="modified residue" description="Phosphothreonine" evidence="2">
    <location>
        <position position="195"/>
    </location>
</feature>
<feature type="modified residue" description="N6-acetyllysine; alternate" evidence="2">
    <location>
        <position position="266"/>
    </location>
</feature>
<feature type="modified residue" description="N6-acetyllysine; alternate" evidence="4">
    <location>
        <position position="270"/>
    </location>
</feature>
<feature type="modified residue" description="N6-acetyllysine" evidence="2">
    <location>
        <position position="305"/>
    </location>
</feature>
<feature type="modified residue" description="N6-acetyllysine; alternate" evidence="4">
    <location>
        <position position="322"/>
    </location>
</feature>
<feature type="modified residue" description="N6-succinyllysine; alternate" evidence="4">
    <location>
        <position position="322"/>
    </location>
</feature>
<feature type="modified residue" description="4-hydroxyproline" evidence="2">
    <location>
        <position position="408"/>
    </location>
</feature>
<feature type="modified residue" description="N6-acetyllysine" evidence="4">
    <location>
        <position position="475"/>
    </location>
</feature>
<feature type="modified residue" description="N6-succinyllysine" evidence="4">
    <location>
        <position position="498"/>
    </location>
</feature>
<feature type="cross-link" description="Glycyl lysine isopeptide (Lys-Gly) (interchain with G-Cter in SUMO2)" evidence="2">
    <location>
        <position position="115"/>
    </location>
</feature>
<feature type="cross-link" description="Glycyl lysine isopeptide (Lys-Gly) (interchain with G-Cter in SUMO1); alternate" evidence="2">
    <location>
        <position position="166"/>
    </location>
</feature>
<feature type="cross-link" description="Glycyl lysine isopeptide (Lys-Gly) (interchain with G-Cter in SUMO2); alternate" evidence="2">
    <location>
        <position position="266"/>
    </location>
</feature>
<feature type="cross-link" description="Glycyl lysine isopeptide (Lys-Gly) (interchain with G-Cter in SUMO2); alternate" evidence="2">
    <location>
        <position position="270"/>
    </location>
</feature>
<feature type="splice variant" id="VSP_011107" description="In isoform M2." evidence="6">
    <original>VFHRLLFEELARASSQSTDPLEAMAMGSVEASYKCLAAALIVLTE</original>
    <variation>IYHLQLFEELRRLAPITSDPTEAAAVGAVEASFKCCSGAIIVLTK</variation>
    <location>
        <begin position="389"/>
        <end position="433"/>
    </location>
</feature>
<feature type="modified residue" description="S-nitrosocysteine" evidence="2">
    <location sequence="P11980-2">
        <position position="423"/>
    </location>
</feature>
<feature type="modified residue" description="S-nitrosocysteine" evidence="2">
    <location sequence="P11980-2">
        <position position="424"/>
    </location>
</feature>
<dbReference type="EC" id="2.7.1.40" evidence="2"/>
<dbReference type="EC" id="2.7.11.1" evidence="2"/>
<dbReference type="EC" id="2.7.10.2" evidence="2"/>
<dbReference type="EMBL" id="M24359">
    <property type="protein sequence ID" value="AAB93666.1"/>
    <property type="molecule type" value="Genomic_DNA"/>
</dbReference>
<dbReference type="EMBL" id="M24359">
    <property type="protein sequence ID" value="AAB93667.1"/>
    <property type="molecule type" value="Genomic_DNA"/>
</dbReference>
<dbReference type="EMBL" id="M14377">
    <property type="status" value="NOT_ANNOTATED_CDS"/>
    <property type="molecule type" value="Genomic_DNA"/>
</dbReference>
<dbReference type="EMBL" id="X15800">
    <property type="protein sequence ID" value="CAA33799.1"/>
    <property type="molecule type" value="mRNA"/>
</dbReference>
<dbReference type="PIR" id="A26186">
    <property type="entry name" value="A26186"/>
</dbReference>
<dbReference type="PIR" id="B26186">
    <property type="entry name" value="B26186"/>
</dbReference>
<dbReference type="RefSeq" id="NP_445749.1">
    <molecule id="P11980-1"/>
    <property type="nucleotide sequence ID" value="NM_053297.2"/>
</dbReference>
<dbReference type="RefSeq" id="XP_006243250.2">
    <property type="nucleotide sequence ID" value="XM_006243188.3"/>
</dbReference>
<dbReference type="RefSeq" id="XP_063121031.1">
    <molecule id="P11980-1"/>
    <property type="nucleotide sequence ID" value="XM_063264961.1"/>
</dbReference>
<dbReference type="RefSeq" id="XP_063121032.1">
    <molecule id="P11980-1"/>
    <property type="nucleotide sequence ID" value="XM_063264962.1"/>
</dbReference>
<dbReference type="RefSeq" id="XP_063121033.1">
    <molecule id="P11980-2"/>
    <property type="nucleotide sequence ID" value="XM_063264963.1"/>
</dbReference>
<dbReference type="SMR" id="P11980"/>
<dbReference type="BioGRID" id="247659">
    <property type="interactions" value="11"/>
</dbReference>
<dbReference type="CORUM" id="P11980"/>
<dbReference type="FunCoup" id="P11980">
    <property type="interactions" value="1614"/>
</dbReference>
<dbReference type="IntAct" id="P11980">
    <property type="interactions" value="6"/>
</dbReference>
<dbReference type="MINT" id="P11980"/>
<dbReference type="STRING" id="10116.ENSRNOP00000015331"/>
<dbReference type="BindingDB" id="P11980"/>
<dbReference type="ChEMBL" id="CHEMBL4994"/>
<dbReference type="MoonProt" id="P11980"/>
<dbReference type="GlyGen" id="P11980">
    <property type="glycosylation" value="1 site, 1 O-linked glycan (1 site)"/>
</dbReference>
<dbReference type="iPTMnet" id="P11980"/>
<dbReference type="PhosphoSitePlus" id="P11980"/>
<dbReference type="jPOST" id="P11980"/>
<dbReference type="PaxDb" id="10116-ENSRNOP00000015331"/>
<dbReference type="DNASU" id="25630"/>
<dbReference type="GeneID" id="25630"/>
<dbReference type="KEGG" id="rno:25630"/>
<dbReference type="UCSC" id="RGD:3337">
    <molecule id="P11980-1"/>
    <property type="organism name" value="rat"/>
</dbReference>
<dbReference type="AGR" id="RGD:3337"/>
<dbReference type="CTD" id="5315"/>
<dbReference type="RGD" id="3337">
    <property type="gene designation" value="Pkm"/>
</dbReference>
<dbReference type="VEuPathDB" id="HostDB:ENSRNOG00000011329"/>
<dbReference type="eggNOG" id="KOG2323">
    <property type="taxonomic scope" value="Eukaryota"/>
</dbReference>
<dbReference type="HOGENOM" id="CLU_015439_0_1_1"/>
<dbReference type="InParanoid" id="P11980"/>
<dbReference type="PhylomeDB" id="P11980"/>
<dbReference type="TreeFam" id="TF300390"/>
<dbReference type="SABIO-RK" id="P11980"/>
<dbReference type="UniPathway" id="UPA00109">
    <property type="reaction ID" value="UER00188"/>
</dbReference>
<dbReference type="PRO" id="PR:P11980"/>
<dbReference type="Proteomes" id="UP000002494">
    <property type="component" value="Chromosome 8"/>
</dbReference>
<dbReference type="Bgee" id="ENSRNOG00000011329">
    <property type="expression patterns" value="Expressed in skeletal muscle tissue and 19 other cell types or tissues"/>
</dbReference>
<dbReference type="ExpressionAtlas" id="P11980">
    <property type="expression patterns" value="baseline and differential"/>
</dbReference>
<dbReference type="GO" id="GO:0005929">
    <property type="term" value="C:cilium"/>
    <property type="evidence" value="ECO:0000266"/>
    <property type="project" value="RGD"/>
</dbReference>
<dbReference type="GO" id="GO:0005737">
    <property type="term" value="C:cytoplasm"/>
    <property type="evidence" value="ECO:0000266"/>
    <property type="project" value="RGD"/>
</dbReference>
<dbReference type="GO" id="GO:0005829">
    <property type="term" value="C:cytosol"/>
    <property type="evidence" value="ECO:0000266"/>
    <property type="project" value="RGD"/>
</dbReference>
<dbReference type="GO" id="GO:0005634">
    <property type="term" value="C:nucleus"/>
    <property type="evidence" value="ECO:0000266"/>
    <property type="project" value="RGD"/>
</dbReference>
<dbReference type="GO" id="GO:1902912">
    <property type="term" value="C:pyruvate kinase complex"/>
    <property type="evidence" value="ECO:0000314"/>
    <property type="project" value="CAFA"/>
</dbReference>
<dbReference type="GO" id="GO:0005791">
    <property type="term" value="C:rough endoplasmic reticulum"/>
    <property type="evidence" value="ECO:0000250"/>
    <property type="project" value="UniProtKB"/>
</dbReference>
<dbReference type="GO" id="GO:0043531">
    <property type="term" value="F:ADP binding"/>
    <property type="evidence" value="ECO:0000314"/>
    <property type="project" value="RGD"/>
</dbReference>
<dbReference type="GO" id="GO:0005524">
    <property type="term" value="F:ATP binding"/>
    <property type="evidence" value="ECO:0007669"/>
    <property type="project" value="UniProtKB-KW"/>
</dbReference>
<dbReference type="GO" id="GO:0042802">
    <property type="term" value="F:identical protein binding"/>
    <property type="evidence" value="ECO:0000314"/>
    <property type="project" value="CAFA"/>
</dbReference>
<dbReference type="GO" id="GO:0000287">
    <property type="term" value="F:magnesium ion binding"/>
    <property type="evidence" value="ECO:0007669"/>
    <property type="project" value="InterPro"/>
</dbReference>
<dbReference type="GO" id="GO:0003729">
    <property type="term" value="F:mRNA binding"/>
    <property type="evidence" value="ECO:0000250"/>
    <property type="project" value="UniProtKB"/>
</dbReference>
<dbReference type="GO" id="GO:0030955">
    <property type="term" value="F:potassium ion binding"/>
    <property type="evidence" value="ECO:0007669"/>
    <property type="project" value="InterPro"/>
</dbReference>
<dbReference type="GO" id="GO:0046983">
    <property type="term" value="F:protein dimerization activity"/>
    <property type="evidence" value="ECO:0000314"/>
    <property type="project" value="RGD"/>
</dbReference>
<dbReference type="GO" id="GO:0004713">
    <property type="term" value="F:protein tyrosine kinase activity"/>
    <property type="evidence" value="ECO:0007669"/>
    <property type="project" value="RHEA"/>
</dbReference>
<dbReference type="GO" id="GO:0004743">
    <property type="term" value="F:pyruvate kinase activity"/>
    <property type="evidence" value="ECO:0000314"/>
    <property type="project" value="CAFA"/>
</dbReference>
<dbReference type="GO" id="GO:0070324">
    <property type="term" value="F:thyroid hormone binding"/>
    <property type="evidence" value="ECO:0000314"/>
    <property type="project" value="CAFA"/>
</dbReference>
<dbReference type="GO" id="GO:0031100">
    <property type="term" value="P:animal organ regeneration"/>
    <property type="evidence" value="ECO:0000314"/>
    <property type="project" value="RGD"/>
</dbReference>
<dbReference type="GO" id="GO:0061621">
    <property type="term" value="P:canonical glycolysis"/>
    <property type="evidence" value="ECO:0000266"/>
    <property type="project" value="RGD"/>
</dbReference>
<dbReference type="GO" id="GO:0032869">
    <property type="term" value="P:cellular response to insulin stimulus"/>
    <property type="evidence" value="ECO:0000318"/>
    <property type="project" value="GO_Central"/>
</dbReference>
<dbReference type="GO" id="GO:0006006">
    <property type="term" value="P:glucose metabolic process"/>
    <property type="evidence" value="ECO:0000314"/>
    <property type="project" value="RGD"/>
</dbReference>
<dbReference type="GO" id="GO:0006096">
    <property type="term" value="P:glycolytic process"/>
    <property type="evidence" value="ECO:0000314"/>
    <property type="project" value="CAFA"/>
</dbReference>
<dbReference type="GO" id="GO:0001889">
    <property type="term" value="P:liver development"/>
    <property type="evidence" value="ECO:0000314"/>
    <property type="project" value="RGD"/>
</dbReference>
<dbReference type="GO" id="GO:2000767">
    <property type="term" value="P:positive regulation of cytoplasmic translation"/>
    <property type="evidence" value="ECO:0000250"/>
    <property type="project" value="UniProtKB"/>
</dbReference>
<dbReference type="GO" id="GO:1903672">
    <property type="term" value="P:positive regulation of sprouting angiogenesis"/>
    <property type="evidence" value="ECO:0000250"/>
    <property type="project" value="UniProtKB"/>
</dbReference>
<dbReference type="GO" id="GO:0012501">
    <property type="term" value="P:programmed cell death"/>
    <property type="evidence" value="ECO:0000266"/>
    <property type="project" value="RGD"/>
</dbReference>
<dbReference type="GO" id="GO:0051289">
    <property type="term" value="P:protein homotetramerization"/>
    <property type="evidence" value="ECO:0000314"/>
    <property type="project" value="RGD"/>
</dbReference>
<dbReference type="GO" id="GO:0051262">
    <property type="term" value="P:protein tetramerization"/>
    <property type="evidence" value="ECO:0000314"/>
    <property type="project" value="RGD"/>
</dbReference>
<dbReference type="GO" id="GO:0042866">
    <property type="term" value="P:pyruvate biosynthetic process"/>
    <property type="evidence" value="ECO:0000314"/>
    <property type="project" value="RGD"/>
</dbReference>
<dbReference type="GO" id="GO:0009629">
    <property type="term" value="P:response to gravity"/>
    <property type="evidence" value="ECO:0000270"/>
    <property type="project" value="RGD"/>
</dbReference>
<dbReference type="GO" id="GO:0001666">
    <property type="term" value="P:response to hypoxia"/>
    <property type="evidence" value="ECO:0000270"/>
    <property type="project" value="RGD"/>
</dbReference>
<dbReference type="GO" id="GO:0032868">
    <property type="term" value="P:response to insulin"/>
    <property type="evidence" value="ECO:0000270"/>
    <property type="project" value="RGD"/>
</dbReference>
<dbReference type="GO" id="GO:0014870">
    <property type="term" value="P:response to muscle inactivity"/>
    <property type="evidence" value="ECO:0000270"/>
    <property type="project" value="RGD"/>
</dbReference>
<dbReference type="GO" id="GO:0007584">
    <property type="term" value="P:response to nutrient"/>
    <property type="evidence" value="ECO:0000270"/>
    <property type="project" value="RGD"/>
</dbReference>
<dbReference type="GO" id="GO:0043403">
    <property type="term" value="P:skeletal muscle tissue regeneration"/>
    <property type="evidence" value="ECO:0000314"/>
    <property type="project" value="RGD"/>
</dbReference>
<dbReference type="CDD" id="cd00288">
    <property type="entry name" value="Pyruvate_Kinase"/>
    <property type="match status" value="1"/>
</dbReference>
<dbReference type="FunFam" id="3.20.20.60:FF:000025">
    <property type="entry name" value="Pyruvate kinase"/>
    <property type="match status" value="1"/>
</dbReference>
<dbReference type="FunFam" id="3.40.1380.20:FF:000001">
    <property type="entry name" value="Pyruvate kinase"/>
    <property type="match status" value="1"/>
</dbReference>
<dbReference type="FunFam" id="3.40.1380.20:FF:000002">
    <property type="entry name" value="Pyruvate kinase"/>
    <property type="match status" value="1"/>
</dbReference>
<dbReference type="FunFam" id="2.40.33.10:FF:000023">
    <property type="entry name" value="Pyruvate kinase PKM"/>
    <property type="match status" value="1"/>
</dbReference>
<dbReference type="Gene3D" id="3.20.20.60">
    <property type="entry name" value="Phosphoenolpyruvate-binding domains"/>
    <property type="match status" value="1"/>
</dbReference>
<dbReference type="Gene3D" id="2.40.33.10">
    <property type="entry name" value="PK beta-barrel domain-like"/>
    <property type="match status" value="1"/>
</dbReference>
<dbReference type="Gene3D" id="3.40.1380.20">
    <property type="entry name" value="Pyruvate kinase, C-terminal domain"/>
    <property type="match status" value="2"/>
</dbReference>
<dbReference type="InterPro" id="IPR001697">
    <property type="entry name" value="Pyr_Knase"/>
</dbReference>
<dbReference type="InterPro" id="IPR015813">
    <property type="entry name" value="Pyrv/PenolPyrv_kinase-like_dom"/>
</dbReference>
<dbReference type="InterPro" id="IPR040442">
    <property type="entry name" value="Pyrv_kinase-like_dom_sf"/>
</dbReference>
<dbReference type="InterPro" id="IPR011037">
    <property type="entry name" value="Pyrv_Knase-like_insert_dom_sf"/>
</dbReference>
<dbReference type="InterPro" id="IPR018209">
    <property type="entry name" value="Pyrv_Knase_AS"/>
</dbReference>
<dbReference type="InterPro" id="IPR015793">
    <property type="entry name" value="Pyrv_Knase_brl"/>
</dbReference>
<dbReference type="InterPro" id="IPR015795">
    <property type="entry name" value="Pyrv_Knase_C"/>
</dbReference>
<dbReference type="InterPro" id="IPR036918">
    <property type="entry name" value="Pyrv_Knase_C_sf"/>
</dbReference>
<dbReference type="InterPro" id="IPR015806">
    <property type="entry name" value="Pyrv_Knase_insert_dom_sf"/>
</dbReference>
<dbReference type="NCBIfam" id="NF004491">
    <property type="entry name" value="PRK05826.1"/>
    <property type="match status" value="1"/>
</dbReference>
<dbReference type="NCBIfam" id="NF004978">
    <property type="entry name" value="PRK06354.1"/>
    <property type="match status" value="1"/>
</dbReference>
<dbReference type="NCBIfam" id="TIGR01064">
    <property type="entry name" value="pyruv_kin"/>
    <property type="match status" value="1"/>
</dbReference>
<dbReference type="PANTHER" id="PTHR11817">
    <property type="entry name" value="PYRUVATE KINASE"/>
    <property type="match status" value="1"/>
</dbReference>
<dbReference type="Pfam" id="PF00224">
    <property type="entry name" value="PK"/>
    <property type="match status" value="1"/>
</dbReference>
<dbReference type="Pfam" id="PF02887">
    <property type="entry name" value="PK_C"/>
    <property type="match status" value="1"/>
</dbReference>
<dbReference type="PRINTS" id="PR01050">
    <property type="entry name" value="PYRUVTKNASE"/>
</dbReference>
<dbReference type="SUPFAM" id="SSF51621">
    <property type="entry name" value="Phosphoenolpyruvate/pyruvate domain"/>
    <property type="match status" value="1"/>
</dbReference>
<dbReference type="SUPFAM" id="SSF50800">
    <property type="entry name" value="PK beta-barrel domain-like"/>
    <property type="match status" value="1"/>
</dbReference>
<dbReference type="SUPFAM" id="SSF52935">
    <property type="entry name" value="PK C-terminal domain-like"/>
    <property type="match status" value="1"/>
</dbReference>
<dbReference type="PROSITE" id="PS00110">
    <property type="entry name" value="PYRUVATE_KINASE"/>
    <property type="match status" value="1"/>
</dbReference>
<protein>
    <recommendedName>
        <fullName>Pyruvate kinase PKM</fullName>
        <ecNumber evidence="2">2.7.1.40</ecNumber>
    </recommendedName>
    <alternativeName>
        <fullName>Pyruvate kinase muscle isozyme</fullName>
    </alternativeName>
    <alternativeName>
        <fullName evidence="6">Threonine-protein kinase PKM2</fullName>
        <ecNumber evidence="2">2.7.11.1</ecNumber>
    </alternativeName>
    <alternativeName>
        <fullName evidence="6">Tyrosine-protein kinase PKM2</fullName>
        <ecNumber evidence="2">2.7.10.2</ecNumber>
    </alternativeName>
</protein>
<accession>P11980</accession>
<accession>P11981</accession>
<evidence type="ECO:0000250" key="1">
    <source>
        <dbReference type="UniProtKB" id="P00549"/>
    </source>
</evidence>
<evidence type="ECO:0000250" key="2">
    <source>
        <dbReference type="UniProtKB" id="P14618"/>
    </source>
</evidence>
<evidence type="ECO:0000250" key="3">
    <source>
        <dbReference type="UniProtKB" id="P30613"/>
    </source>
</evidence>
<evidence type="ECO:0000250" key="4">
    <source>
        <dbReference type="UniProtKB" id="P52480"/>
    </source>
</evidence>
<evidence type="ECO:0000303" key="5">
    <source>
    </source>
</evidence>
<evidence type="ECO:0000305" key="6"/>
<evidence type="ECO:0007744" key="7">
    <source>
    </source>
</evidence>
<gene>
    <name type="primary">Pkm</name>
    <name type="synonym">Pkm2</name>
    <name type="synonym">Pykm</name>
</gene>
<comment type="function">
    <text evidence="2">Catalyzes the final rate-limiting step of glycolysis by mediating the transfer of a phosphoryl group from phosphoenolpyruvate (PEP) to ADP, generating ATP. The ratio between the highly active tetrameric form and nearly inactive dimeric form determines whether glucose carbons are channeled to biosynthetic processes or used for glycolytic ATP production. The transition between the 2 forms contributes to the control of glycolysis and is important for tumor cell proliferation and survival.</text>
</comment>
<comment type="function">
    <molecule>Isoform M2</molecule>
    <text evidence="2 4">Isoform specifically expressed during embryogenesis that has low pyruvate kinase activity by itself and requires allosteric activation by D-fructose 1,6-bisphosphate (FBP) for pyruvate kinase activity. In addition to its pyruvate kinase activity in the cytoplasm, also acts as a regulator of transcription in the nucleus by acting as a protein kinase. Translocates into the nucleus in response to various signals, such as EGF receptor activation, and homodimerizes, leading to its conversion into a protein threonine- and tyrosine-protein kinase. Catalyzes phosphorylation of STAT3 at 'Tyr-705' and histone H3 at 'Thr-11' (H3T11ph), leading to activate transcription. Its ability to activate transcription plays a role in cancer cells by promoting cell proliferation and promote tumorigenesis (By similarity). Promotes the expression of the immune checkpoint protein CD274 in BMAL1-deficient macrophages. May also act as a translation regulator for a subset of mRNAs, independently of its pyruvate kinase activity: associates with subpools of endoplasmic reticulum-associated ribosomes, binds directly to the mRNAs translated at the endoplasmic reticulum and promotes translation of these endoplasmic reticulum-destined mRNAs (By similarity). Plays a role in caspase independent cell death of tumor cells (By similarity).</text>
</comment>
<comment type="function">
    <molecule>Isoform M1</molecule>
    <text evidence="2">Pyruvate kinase isoform expressed in adult tissues, which replaces isoform M2 after birth. In contrast to isoform M2, has high pyruvate kinase activity by itself and does not require allosteric activation by D-fructose 1,6-bisphosphate (FBP) for activity.</text>
</comment>
<comment type="catalytic activity">
    <molecule>Isoform M2</molecule>
    <reaction evidence="2">
        <text>pyruvate + ATP = phosphoenolpyruvate + ADP + H(+)</text>
        <dbReference type="Rhea" id="RHEA:18157"/>
        <dbReference type="ChEBI" id="CHEBI:15361"/>
        <dbReference type="ChEBI" id="CHEBI:15378"/>
        <dbReference type="ChEBI" id="CHEBI:30616"/>
        <dbReference type="ChEBI" id="CHEBI:58702"/>
        <dbReference type="ChEBI" id="CHEBI:456216"/>
        <dbReference type="EC" id="2.7.1.40"/>
    </reaction>
    <physiologicalReaction direction="right-to-left" evidence="2">
        <dbReference type="Rhea" id="RHEA:18159"/>
    </physiologicalReaction>
</comment>
<comment type="catalytic activity">
    <molecule>Isoform M1</molecule>
    <reaction evidence="2">
        <text>pyruvate + ATP = phosphoenolpyruvate + ADP + H(+)</text>
        <dbReference type="Rhea" id="RHEA:18157"/>
        <dbReference type="ChEBI" id="CHEBI:15361"/>
        <dbReference type="ChEBI" id="CHEBI:15378"/>
        <dbReference type="ChEBI" id="CHEBI:30616"/>
        <dbReference type="ChEBI" id="CHEBI:58702"/>
        <dbReference type="ChEBI" id="CHEBI:456216"/>
        <dbReference type="EC" id="2.7.1.40"/>
    </reaction>
</comment>
<comment type="catalytic activity">
    <molecule>Isoform M2</molecule>
    <reaction evidence="2">
        <text>L-tyrosyl-[protein] + ATP = O-phospho-L-tyrosyl-[protein] + ADP + H(+)</text>
        <dbReference type="Rhea" id="RHEA:10596"/>
        <dbReference type="Rhea" id="RHEA-COMP:10136"/>
        <dbReference type="Rhea" id="RHEA-COMP:20101"/>
        <dbReference type="ChEBI" id="CHEBI:15378"/>
        <dbReference type="ChEBI" id="CHEBI:30616"/>
        <dbReference type="ChEBI" id="CHEBI:46858"/>
        <dbReference type="ChEBI" id="CHEBI:61978"/>
        <dbReference type="ChEBI" id="CHEBI:456216"/>
        <dbReference type="EC" id="2.7.10.2"/>
    </reaction>
    <physiologicalReaction direction="left-to-right" evidence="2">
        <dbReference type="Rhea" id="RHEA:10597"/>
    </physiologicalReaction>
</comment>
<comment type="catalytic activity">
    <molecule>Isoform M2</molecule>
    <reaction evidence="2">
        <text>L-threonyl-[protein] + ATP = O-phospho-L-threonyl-[protein] + ADP + H(+)</text>
        <dbReference type="Rhea" id="RHEA:46608"/>
        <dbReference type="Rhea" id="RHEA-COMP:11060"/>
        <dbReference type="Rhea" id="RHEA-COMP:11605"/>
        <dbReference type="ChEBI" id="CHEBI:15378"/>
        <dbReference type="ChEBI" id="CHEBI:30013"/>
        <dbReference type="ChEBI" id="CHEBI:30616"/>
        <dbReference type="ChEBI" id="CHEBI:61977"/>
        <dbReference type="ChEBI" id="CHEBI:456216"/>
        <dbReference type="EC" id="2.7.11.1"/>
    </reaction>
    <physiologicalReaction direction="left-to-right" evidence="2">
        <dbReference type="Rhea" id="RHEA:46609"/>
    </physiologicalReaction>
</comment>
<comment type="cofactor">
    <cofactor evidence="2">
        <name>Mg(2+)</name>
        <dbReference type="ChEBI" id="CHEBI:18420"/>
    </cofactor>
</comment>
<comment type="cofactor">
    <cofactor evidence="2">
        <name>K(+)</name>
        <dbReference type="ChEBI" id="CHEBI:29103"/>
    </cofactor>
</comment>
<comment type="activity regulation">
    <molecule>Isoform M2</molecule>
    <text evidence="2">Isoform M2 is allosterically activated by D-fructose 1,6-bisphosphate (FBP). Inhibited by oxalate and 3,3',5-triiodo-L-thyronine (T3). The activity of the tetrameric form is inhibited by PML. Selective binding to tyrosine-phosphorylated peptides releases the allosteric activator FBP, leading to inhibition of PKM enzymatic activity, this diverts glucose metabolites from energy production to anabolic processes when cells are stimulated by certain growth factors. Glycolytic flux are highly dependent on de novo biosynthesis of serine and glycine, and serine is a natural ligand and allosteric activator of isoform M2.</text>
</comment>
<comment type="activity regulation">
    <molecule>Isoform M1</molecule>
    <text evidence="2">Has high pyruvate kinase activity by itself and does not require allosteric activation by D-fructose 1,6-bisphosphate (FBP) for activity.</text>
</comment>
<comment type="pathway">
    <text evidence="2">Carbohydrate degradation; glycolysis; pyruvate from D-glyceraldehyde 3-phosphate: step 5/5.</text>
</comment>
<comment type="subunit">
    <molecule>Isoform M2</molecule>
    <text evidence="2">Monomer and homotetramer; exists as a monomer in the absence of D-fructose 1,6-bisphosphate (FBP), and reversibly associates to form a homotetramer in the presence of FBP. The monomeric form binds 3,3',5-triiodo-L-thyronine (T3). Tetramer formation induces pyruvate kinase activity. The tetrameric form has high affinity for the substrate and is associated within the glycolytic enzyme complex. FBP stimulates the formation of tetramers from dimers. Homodimer; exists in a dimeric form in tumor cells and the dimeric form has less affinity for the phosphoenolpyruvate substrate. The homodimer converts into a protein kinase. Interacts with HERC1, POU5F1 and PML. Interacts with EGLN3; the interaction hydroxylates PKM under hypoxia and enhances binding to HIF1A. Interacts with HIF1A; the interaction is enhanced by binding of EGLN3, promoting enhanced transcription activity under hypoxia. Interacts with TRIM35; this interaction prevents FGFR1-dependent tyrosine phosphorylation. Interacts with JMJD8. Interacts with TRAF4. Interacts with (phosphorylated) CTNNB1; leading to activate transcription. Interacts with TSC22D2; the interaction results in reduced nuclear levels of PKM isoform M2, leading to repression of cyclin CCND1 transcription and reduced cell growth (By similarity).</text>
</comment>
<comment type="subcellular location">
    <molecule>Isoform M2</molecule>
    <subcellularLocation>
        <location evidence="2">Cytoplasm</location>
    </subcellularLocation>
    <subcellularLocation>
        <location evidence="2">Nucleus</location>
    </subcellularLocation>
    <text evidence="2">Translocates to the nucleus in response to various signals, such as EGF receptor activation or apoptotic stimuli.</text>
</comment>
<comment type="subcellular location">
    <molecule>Isoform M1</molecule>
    <subcellularLocation>
        <location evidence="2">Cytoplasm</location>
    </subcellularLocation>
</comment>
<comment type="alternative products">
    <event type="alternative splicing"/>
    <isoform>
        <id>P11980-1</id>
        <name evidence="5">M1</name>
        <name evidence="5">PKM1</name>
        <sequence type="displayed"/>
    </isoform>
    <isoform>
        <id>P11980-2</id>
        <id>P11981-1</id>
        <name evidence="5">M2</name>
        <name evidence="5">PKM2</name>
        <sequence type="described" ref="VSP_011107"/>
    </isoform>
</comment>
<comment type="PTM">
    <text evidence="2">ISGylated.</text>
</comment>
<comment type="PTM">
    <text evidence="2">Under hypoxia, hydroxylated by EGLN3.</text>
</comment>
<comment type="PTM">
    <text evidence="2">Acetylation at Lys-305 is stimulated by high glucose concentration, it decreases enzyme activity and promotes its lysosomal-dependent degradation via chaperone-mediated autophagy.</text>
</comment>
<comment type="PTM">
    <molecule>Isoform M2</molecule>
    <text evidence="2">Acetylated by EP300, leading to impair phosphoenolpyruvate substrate-binding and promote its homodimerization and subsequent translocation to the nucleus. Deacetylation by SIRT6 promotes its nuclear export into the cytoplasm, leading to suppress its nuclear localization and oncogenic function.</text>
</comment>
<comment type="PTM">
    <molecule>Isoform M2</molecule>
    <text evidence="2">S-nitrosylation at Cys-423 and Cys-424 inhibits homotetramerization and pyruvate kinase activity (By similarity). S-nitrosylation is indirectly inhibited by AKR1A1 which degrades S-nitroso-CoA, a cofactor required to S-nitrosylate proteins (By similarity).</text>
</comment>
<comment type="PTM">
    <text evidence="2">FGFR1-dependent tyrosine phosphorylation is reduced by interaction with TRIM35.</text>
</comment>
<comment type="miscellaneous">
    <text evidence="2">There are 4 isozymes of pyruvate kinase in mammals (L, R, M1, M2) encoded by 2 different genes: PKLR and PKM. The L and R isozymes are generated from the PKLR by differential splicing of RNA; the M1 and M2 forms are produced from the PKM gene by differential splicing. L type is major isozyme in the liver, R is found in red cells, M1 is the main form in muscle, heart and brain, and M2 is found in early fetal tissues as well as in most cancer cells.</text>
</comment>
<comment type="similarity">
    <text evidence="6">Belongs to the pyruvate kinase family.</text>
</comment>